<proteinExistence type="inferred from homology"/>
<reference key="1">
    <citation type="submission" date="2003-03" db="EMBL/GenBank/DDBJ databases">
        <title>The complete genome sequence of Neisseria gonorrhoeae.</title>
        <authorList>
            <person name="Lewis L.A."/>
            <person name="Gillaspy A.F."/>
            <person name="McLaughlin R.E."/>
            <person name="Gipson M."/>
            <person name="Ducey T.F."/>
            <person name="Ownbey T."/>
            <person name="Hartman K."/>
            <person name="Nydick C."/>
            <person name="Carson M.B."/>
            <person name="Vaughn J."/>
            <person name="Thomson C."/>
            <person name="Song L."/>
            <person name="Lin S."/>
            <person name="Yuan X."/>
            <person name="Najar F."/>
            <person name="Zhan M."/>
            <person name="Ren Q."/>
            <person name="Zhu H."/>
            <person name="Qi S."/>
            <person name="Kenton S.M."/>
            <person name="Lai H."/>
            <person name="White J.D."/>
            <person name="Clifton S."/>
            <person name="Roe B.A."/>
            <person name="Dyer D.W."/>
        </authorList>
    </citation>
    <scope>NUCLEOTIDE SEQUENCE [LARGE SCALE GENOMIC DNA]</scope>
    <source>
        <strain>ATCC 700825 / FA 1090</strain>
    </source>
</reference>
<organism>
    <name type="scientific">Neisseria gonorrhoeae (strain ATCC 700825 / FA 1090)</name>
    <dbReference type="NCBI Taxonomy" id="242231"/>
    <lineage>
        <taxon>Bacteria</taxon>
        <taxon>Pseudomonadati</taxon>
        <taxon>Pseudomonadota</taxon>
        <taxon>Betaproteobacteria</taxon>
        <taxon>Neisseriales</taxon>
        <taxon>Neisseriaceae</taxon>
        <taxon>Neisseria</taxon>
    </lineage>
</organism>
<feature type="chain" id="PRO_0000155511" description="Ribosomal RNA large subunit methyltransferase E">
    <location>
        <begin position="1"/>
        <end position="206"/>
    </location>
</feature>
<feature type="active site" description="Proton acceptor" evidence="1">
    <location>
        <position position="162"/>
    </location>
</feature>
<feature type="binding site" evidence="1">
    <location>
        <position position="61"/>
    </location>
    <ligand>
        <name>S-adenosyl-L-methionine</name>
        <dbReference type="ChEBI" id="CHEBI:59789"/>
    </ligand>
</feature>
<feature type="binding site" evidence="1">
    <location>
        <position position="63"/>
    </location>
    <ligand>
        <name>S-adenosyl-L-methionine</name>
        <dbReference type="ChEBI" id="CHEBI:59789"/>
    </ligand>
</feature>
<feature type="binding site" evidence="1">
    <location>
        <position position="81"/>
    </location>
    <ligand>
        <name>S-adenosyl-L-methionine</name>
        <dbReference type="ChEBI" id="CHEBI:59789"/>
    </ligand>
</feature>
<feature type="binding site" evidence="1">
    <location>
        <position position="97"/>
    </location>
    <ligand>
        <name>S-adenosyl-L-methionine</name>
        <dbReference type="ChEBI" id="CHEBI:59789"/>
    </ligand>
</feature>
<feature type="binding site" evidence="1">
    <location>
        <position position="122"/>
    </location>
    <ligand>
        <name>S-adenosyl-L-methionine</name>
        <dbReference type="ChEBI" id="CHEBI:59789"/>
    </ligand>
</feature>
<accession>Q5F9L0</accession>
<name>RLME_NEIG1</name>
<evidence type="ECO:0000255" key="1">
    <source>
        <dbReference type="HAMAP-Rule" id="MF_01547"/>
    </source>
</evidence>
<comment type="function">
    <text evidence="1">Specifically methylates the uridine in position 2552 of 23S rRNA at the 2'-O position of the ribose in the fully assembled 50S ribosomal subunit.</text>
</comment>
<comment type="catalytic activity">
    <reaction evidence="1">
        <text>uridine(2552) in 23S rRNA + S-adenosyl-L-methionine = 2'-O-methyluridine(2552) in 23S rRNA + S-adenosyl-L-homocysteine + H(+)</text>
        <dbReference type="Rhea" id="RHEA:42720"/>
        <dbReference type="Rhea" id="RHEA-COMP:10202"/>
        <dbReference type="Rhea" id="RHEA-COMP:10203"/>
        <dbReference type="ChEBI" id="CHEBI:15378"/>
        <dbReference type="ChEBI" id="CHEBI:57856"/>
        <dbReference type="ChEBI" id="CHEBI:59789"/>
        <dbReference type="ChEBI" id="CHEBI:65315"/>
        <dbReference type="ChEBI" id="CHEBI:74478"/>
        <dbReference type="EC" id="2.1.1.166"/>
    </reaction>
</comment>
<comment type="subcellular location">
    <subcellularLocation>
        <location evidence="1">Cytoplasm</location>
    </subcellularLocation>
</comment>
<comment type="similarity">
    <text evidence="1">Belongs to the class I-like SAM-binding methyltransferase superfamily. RNA methyltransferase RlmE family.</text>
</comment>
<sequence length="206" mass="22726">MAVRSKSSKAWLHEHINDQYVHMAQKDGYRARAAYKLLEINEKDKIIKPGTVLADLGSAPGSWSQVAAKLTGTSGAVFALDILPMEAIGGVSFIQGDFRENDVLAQFETLLDNRPLDLVICDMAPNMSGNAVSDQARSFYLCELALDFASQHLKTGGSFLVKVFQGAGYQEYMAAMREIFGTVQTRKPEASRNRSSEIYLLGKNKR</sequence>
<dbReference type="EC" id="2.1.1.166" evidence="1"/>
<dbReference type="EMBL" id="AE004969">
    <property type="protein sequence ID" value="AAW89127.1"/>
    <property type="molecule type" value="Genomic_DNA"/>
</dbReference>
<dbReference type="RefSeq" id="WP_003698155.1">
    <property type="nucleotide sequence ID" value="NC_002946.2"/>
</dbReference>
<dbReference type="RefSeq" id="YP_207539.1">
    <property type="nucleotide sequence ID" value="NC_002946.2"/>
</dbReference>
<dbReference type="SMR" id="Q5F9L0"/>
<dbReference type="STRING" id="242231.NGO_0383"/>
<dbReference type="KEGG" id="ngo:NGO_0383"/>
<dbReference type="PATRIC" id="fig|242231.10.peg.463"/>
<dbReference type="HOGENOM" id="CLU_009422_4_0_4"/>
<dbReference type="Proteomes" id="UP000000535">
    <property type="component" value="Chromosome"/>
</dbReference>
<dbReference type="GO" id="GO:0005737">
    <property type="term" value="C:cytoplasm"/>
    <property type="evidence" value="ECO:0007669"/>
    <property type="project" value="UniProtKB-SubCell"/>
</dbReference>
<dbReference type="GO" id="GO:0008650">
    <property type="term" value="F:rRNA (uridine-2'-O-)-methyltransferase activity"/>
    <property type="evidence" value="ECO:0007669"/>
    <property type="project" value="UniProtKB-UniRule"/>
</dbReference>
<dbReference type="FunFam" id="3.40.50.150:FF:000005">
    <property type="entry name" value="Ribosomal RNA large subunit methyltransferase E"/>
    <property type="match status" value="1"/>
</dbReference>
<dbReference type="Gene3D" id="3.40.50.150">
    <property type="entry name" value="Vaccinia Virus protein VP39"/>
    <property type="match status" value="1"/>
</dbReference>
<dbReference type="HAMAP" id="MF_01547">
    <property type="entry name" value="RNA_methyltr_E"/>
    <property type="match status" value="1"/>
</dbReference>
<dbReference type="InterPro" id="IPR050082">
    <property type="entry name" value="RNA_methyltr_RlmE"/>
</dbReference>
<dbReference type="InterPro" id="IPR002877">
    <property type="entry name" value="RNA_MeTrfase_FtsJ_dom"/>
</dbReference>
<dbReference type="InterPro" id="IPR015507">
    <property type="entry name" value="rRNA-MeTfrase_E"/>
</dbReference>
<dbReference type="InterPro" id="IPR029063">
    <property type="entry name" value="SAM-dependent_MTases_sf"/>
</dbReference>
<dbReference type="PANTHER" id="PTHR10920">
    <property type="entry name" value="RIBOSOMAL RNA METHYLTRANSFERASE"/>
    <property type="match status" value="1"/>
</dbReference>
<dbReference type="PANTHER" id="PTHR10920:SF18">
    <property type="entry name" value="RRNA METHYLTRANSFERASE 2, MITOCHONDRIAL"/>
    <property type="match status" value="1"/>
</dbReference>
<dbReference type="Pfam" id="PF01728">
    <property type="entry name" value="FtsJ"/>
    <property type="match status" value="1"/>
</dbReference>
<dbReference type="PIRSF" id="PIRSF005461">
    <property type="entry name" value="23S_rRNA_mtase"/>
    <property type="match status" value="1"/>
</dbReference>
<dbReference type="SUPFAM" id="SSF53335">
    <property type="entry name" value="S-adenosyl-L-methionine-dependent methyltransferases"/>
    <property type="match status" value="1"/>
</dbReference>
<gene>
    <name evidence="1" type="primary">rlmE</name>
    <name evidence="1" type="synonym">ftsJ</name>
    <name evidence="1" type="synonym">rrmJ</name>
    <name type="ordered locus">NGO_0383</name>
</gene>
<protein>
    <recommendedName>
        <fullName evidence="1">Ribosomal RNA large subunit methyltransferase E</fullName>
        <ecNumber evidence="1">2.1.1.166</ecNumber>
    </recommendedName>
    <alternativeName>
        <fullName evidence="1">23S rRNA Um2552 methyltransferase</fullName>
    </alternativeName>
    <alternativeName>
        <fullName evidence="1">rRNA (uridine-2'-O-)-methyltransferase</fullName>
    </alternativeName>
</protein>
<keyword id="KW-0963">Cytoplasm</keyword>
<keyword id="KW-0489">Methyltransferase</keyword>
<keyword id="KW-1185">Reference proteome</keyword>
<keyword id="KW-0698">rRNA processing</keyword>
<keyword id="KW-0949">S-adenosyl-L-methionine</keyword>
<keyword id="KW-0808">Transferase</keyword>